<comment type="function">
    <text evidence="1">Stimulates the transcription of various genes by recognizing and binding to a CCAAT motif in promoters.</text>
</comment>
<comment type="subunit">
    <text evidence="1">Heterotrimeric transcription factor composed of three components, NF-YA, NF-YB and NF-YC. NF-YB and NF-YC must interact and dimerize for NF-YA association and DNA binding (By similarity).</text>
</comment>
<comment type="interaction">
    <interactant intactId="EBI-2125961">
        <id>Q9ZVL3</id>
    </interactant>
    <interactant intactId="EBI-2349513">
        <id>Q84MC7</id>
        <label>PYL9</label>
    </interactant>
    <organismsDiffer>false</organismsDiffer>
    <experiments>3</experiments>
</comment>
<comment type="subcellular location">
    <subcellularLocation>
        <location evidence="1">Nucleus</location>
    </subcellularLocation>
</comment>
<comment type="tissue specificity">
    <text evidence="3">Ubiquitous.</text>
</comment>
<comment type="similarity">
    <text evidence="4">Belongs to the NFYC/HAP5 subunit family.</text>
</comment>
<evidence type="ECO:0000250" key="1"/>
<evidence type="ECO:0000256" key="2">
    <source>
        <dbReference type="SAM" id="MobiDB-lite"/>
    </source>
</evidence>
<evidence type="ECO:0000269" key="3">
    <source>
    </source>
</evidence>
<evidence type="ECO:0000305" key="4"/>
<evidence type="ECO:0007829" key="5">
    <source>
        <dbReference type="PDB" id="5G49"/>
    </source>
</evidence>
<evidence type="ECO:0007829" key="6">
    <source>
        <dbReference type="PDB" id="6R0N"/>
    </source>
</evidence>
<evidence type="ECO:0007829" key="7">
    <source>
        <dbReference type="PDB" id="6R2V"/>
    </source>
</evidence>
<keyword id="KW-0002">3D-structure</keyword>
<keyword id="KW-0010">Activator</keyword>
<keyword id="KW-0238">DNA-binding</keyword>
<keyword id="KW-0539">Nucleus</keyword>
<keyword id="KW-1185">Reference proteome</keyword>
<keyword id="KW-0804">Transcription</keyword>
<keyword id="KW-0805">Transcription regulation</keyword>
<sequence length="217" mass="24312">MDQQGQSSAMNYGSNPYQTNAMTTTPTGSDHPAYHQIHQQQQQQLTQQLQSFWETQFKEIEKTTDFKNHSLPLARIKKIMKADEDVRMISAEAPVVFARACEMFILELTLRSWNHTEENKRRTLQKNDIAAAVTRTDIFDFLVDIVPREDLRDEVLGGVGAEAATAAGYPYGYLPPGTAPIGNPGMVMGNPGAYPPNPYMGQPMWQQPGPEQQDPDN</sequence>
<accession>Q9ZVL3</accession>
<gene>
    <name type="primary">NFYC3</name>
    <name type="ordered locus">At1g54830</name>
    <name type="ORF">F14C21.41</name>
    <name type="ORF">T22H22.22</name>
</gene>
<name>NFYC3_ARATH</name>
<dbReference type="EMBL" id="AC005388">
    <property type="protein sequence ID" value="AAC64892.1"/>
    <property type="molecule type" value="Genomic_DNA"/>
</dbReference>
<dbReference type="EMBL" id="AC069144">
    <property type="protein sequence ID" value="AAG51114.1"/>
    <property type="molecule type" value="Genomic_DNA"/>
</dbReference>
<dbReference type="EMBL" id="CP002684">
    <property type="protein sequence ID" value="AEE33151.1"/>
    <property type="molecule type" value="Genomic_DNA"/>
</dbReference>
<dbReference type="EMBL" id="CP002684">
    <property type="protein sequence ID" value="AEE33152.1"/>
    <property type="molecule type" value="Genomic_DNA"/>
</dbReference>
<dbReference type="EMBL" id="CP002684">
    <property type="protein sequence ID" value="AEE33153.1"/>
    <property type="molecule type" value="Genomic_DNA"/>
</dbReference>
<dbReference type="EMBL" id="AY062775">
    <property type="protein sequence ID" value="AAL32853.1"/>
    <property type="molecule type" value="mRNA"/>
</dbReference>
<dbReference type="EMBL" id="AY087517">
    <property type="protein sequence ID" value="AAM65059.1"/>
    <property type="molecule type" value="mRNA"/>
</dbReference>
<dbReference type="EMBL" id="AY081654">
    <property type="protein sequence ID" value="AAM10216.1"/>
    <property type="molecule type" value="mRNA"/>
</dbReference>
<dbReference type="RefSeq" id="NP_175880.1">
    <property type="nucleotide sequence ID" value="NM_104356.3"/>
</dbReference>
<dbReference type="RefSeq" id="NP_849808.1">
    <property type="nucleotide sequence ID" value="NM_179477.2"/>
</dbReference>
<dbReference type="RefSeq" id="NP_974030.1">
    <property type="nucleotide sequence ID" value="NM_202301.2"/>
</dbReference>
<dbReference type="PDB" id="5G49">
    <property type="method" value="X-ray"/>
    <property type="resolution" value="2.30 A"/>
    <property type="chains" value="B=55-148"/>
</dbReference>
<dbReference type="PDB" id="6R0M">
    <property type="method" value="X-ray"/>
    <property type="resolution" value="2.30 A"/>
    <property type="chains" value="B/D=55-148"/>
</dbReference>
<dbReference type="PDB" id="6R0N">
    <property type="method" value="X-ray"/>
    <property type="resolution" value="2.10 A"/>
    <property type="chains" value="B=55-148"/>
</dbReference>
<dbReference type="PDB" id="6R2V">
    <property type="method" value="X-ray"/>
    <property type="resolution" value="2.50 A"/>
    <property type="chains" value="C=55-148"/>
</dbReference>
<dbReference type="PDB" id="7CVQ">
    <property type="method" value="X-ray"/>
    <property type="resolution" value="3.30 A"/>
    <property type="chains" value="A/F/K/P=55-148"/>
</dbReference>
<dbReference type="PDBsum" id="5G49"/>
<dbReference type="PDBsum" id="6R0M"/>
<dbReference type="PDBsum" id="6R0N"/>
<dbReference type="PDBsum" id="6R2V"/>
<dbReference type="PDBsum" id="7CVQ"/>
<dbReference type="SMR" id="Q9ZVL3"/>
<dbReference type="BioGRID" id="27147">
    <property type="interactions" value="24"/>
</dbReference>
<dbReference type="FunCoup" id="Q9ZVL3">
    <property type="interactions" value="1862"/>
</dbReference>
<dbReference type="IntAct" id="Q9ZVL3">
    <property type="interactions" value="4"/>
</dbReference>
<dbReference type="STRING" id="3702.Q9ZVL3"/>
<dbReference type="PaxDb" id="3702-AT1G54830.3"/>
<dbReference type="EnsemblPlants" id="AT1G54830.1">
    <property type="protein sequence ID" value="AT1G54830.1"/>
    <property type="gene ID" value="AT1G54830"/>
</dbReference>
<dbReference type="EnsemblPlants" id="AT1G54830.2">
    <property type="protein sequence ID" value="AT1G54830.2"/>
    <property type="gene ID" value="AT1G54830"/>
</dbReference>
<dbReference type="EnsemblPlants" id="AT1G54830.3">
    <property type="protein sequence ID" value="AT1G54830.3"/>
    <property type="gene ID" value="AT1G54830"/>
</dbReference>
<dbReference type="GeneID" id="841922"/>
<dbReference type="Gramene" id="AT1G54830.1">
    <property type="protein sequence ID" value="AT1G54830.1"/>
    <property type="gene ID" value="AT1G54830"/>
</dbReference>
<dbReference type="Gramene" id="AT1G54830.2">
    <property type="protein sequence ID" value="AT1G54830.2"/>
    <property type="gene ID" value="AT1G54830"/>
</dbReference>
<dbReference type="Gramene" id="AT1G54830.3">
    <property type="protein sequence ID" value="AT1G54830.3"/>
    <property type="gene ID" value="AT1G54830"/>
</dbReference>
<dbReference type="KEGG" id="ath:AT1G54830"/>
<dbReference type="Araport" id="AT1G54830"/>
<dbReference type="TAIR" id="AT1G54830">
    <property type="gene designation" value="NF-YC3"/>
</dbReference>
<dbReference type="eggNOG" id="KOG1657">
    <property type="taxonomic scope" value="Eukaryota"/>
</dbReference>
<dbReference type="HOGENOM" id="CLU_045277_0_0_1"/>
<dbReference type="InParanoid" id="Q9ZVL3"/>
<dbReference type="OMA" id="PAYHQIH"/>
<dbReference type="OrthoDB" id="1272441at2759"/>
<dbReference type="PhylomeDB" id="Q9ZVL3"/>
<dbReference type="PRO" id="PR:Q9ZVL3"/>
<dbReference type="Proteomes" id="UP000006548">
    <property type="component" value="Chromosome 1"/>
</dbReference>
<dbReference type="ExpressionAtlas" id="Q9ZVL3">
    <property type="expression patterns" value="baseline and differential"/>
</dbReference>
<dbReference type="GO" id="GO:0005634">
    <property type="term" value="C:nucleus"/>
    <property type="evidence" value="ECO:0007005"/>
    <property type="project" value="TAIR"/>
</dbReference>
<dbReference type="GO" id="GO:0003700">
    <property type="term" value="F:DNA-binding transcription factor activity"/>
    <property type="evidence" value="ECO:0000250"/>
    <property type="project" value="TAIR"/>
</dbReference>
<dbReference type="GO" id="GO:0046982">
    <property type="term" value="F:protein heterodimerization activity"/>
    <property type="evidence" value="ECO:0007669"/>
    <property type="project" value="InterPro"/>
</dbReference>
<dbReference type="GO" id="GO:0000976">
    <property type="term" value="F:transcription cis-regulatory region binding"/>
    <property type="evidence" value="ECO:0000353"/>
    <property type="project" value="TAIR"/>
</dbReference>
<dbReference type="GO" id="GO:0003712">
    <property type="term" value="F:transcription coregulator activity"/>
    <property type="evidence" value="ECO:0000314"/>
    <property type="project" value="TAIR"/>
</dbReference>
<dbReference type="GO" id="GO:0009738">
    <property type="term" value="P:abscisic acid-activated signaling pathway"/>
    <property type="evidence" value="ECO:0000316"/>
    <property type="project" value="TAIR"/>
</dbReference>
<dbReference type="GO" id="GO:0009740">
    <property type="term" value="P:gibberellic acid mediated signaling pathway"/>
    <property type="evidence" value="ECO:0000316"/>
    <property type="project" value="TAIR"/>
</dbReference>
<dbReference type="GO" id="GO:0048574">
    <property type="term" value="P:long-day photoperiodism, flowering"/>
    <property type="evidence" value="ECO:0000315"/>
    <property type="project" value="TAIR"/>
</dbReference>
<dbReference type="GO" id="GO:2000306">
    <property type="term" value="P:positive regulation of photomorphogenesis"/>
    <property type="evidence" value="ECO:0000315"/>
    <property type="project" value="TAIR"/>
</dbReference>
<dbReference type="GO" id="GO:0010029">
    <property type="term" value="P:regulation of seed germination"/>
    <property type="evidence" value="ECO:0000316"/>
    <property type="project" value="TAIR"/>
</dbReference>
<dbReference type="CDD" id="cd22908">
    <property type="entry name" value="HFD_NFYC-like"/>
    <property type="match status" value="1"/>
</dbReference>
<dbReference type="FunFam" id="1.10.20.10:FF:000006">
    <property type="entry name" value="Nuclear transcription factor Y subunit gamma"/>
    <property type="match status" value="1"/>
</dbReference>
<dbReference type="Gene3D" id="1.10.20.10">
    <property type="entry name" value="Histone, subunit A"/>
    <property type="match status" value="1"/>
</dbReference>
<dbReference type="InterPro" id="IPR009072">
    <property type="entry name" value="Histone-fold"/>
</dbReference>
<dbReference type="InterPro" id="IPR007125">
    <property type="entry name" value="Histone_H2A/H2B/H3"/>
</dbReference>
<dbReference type="InterPro" id="IPR050568">
    <property type="entry name" value="Transcr_DNA_Rep_Reg"/>
</dbReference>
<dbReference type="PANTHER" id="PTHR10252">
    <property type="entry name" value="HISTONE-LIKE TRANSCRIPTION FACTOR CCAAT-RELATED"/>
    <property type="match status" value="1"/>
</dbReference>
<dbReference type="PANTHER" id="PTHR10252:SF106">
    <property type="entry name" value="NUCLEAR TRANSCRIPTION FACTOR Y SUBUNIT C-3-RELATED"/>
    <property type="match status" value="1"/>
</dbReference>
<dbReference type="Pfam" id="PF00125">
    <property type="entry name" value="Histone"/>
    <property type="match status" value="1"/>
</dbReference>
<dbReference type="SUPFAM" id="SSF47113">
    <property type="entry name" value="Histone-fold"/>
    <property type="match status" value="1"/>
</dbReference>
<feature type="chain" id="PRO_0000218252" description="Nuclear transcription factor Y subunit C-3">
    <location>
        <begin position="1"/>
        <end position="217"/>
    </location>
</feature>
<feature type="region of interest" description="Disordered" evidence="2">
    <location>
        <begin position="1"/>
        <end position="29"/>
    </location>
</feature>
<feature type="region of interest" description="Disordered" evidence="2">
    <location>
        <begin position="198"/>
        <end position="217"/>
    </location>
</feature>
<feature type="compositionally biased region" description="Polar residues" evidence="2">
    <location>
        <begin position="1"/>
        <end position="28"/>
    </location>
</feature>
<feature type="strand" evidence="5">
    <location>
        <begin position="66"/>
        <end position="68"/>
    </location>
</feature>
<feature type="helix" evidence="6">
    <location>
        <begin position="73"/>
        <end position="81"/>
    </location>
</feature>
<feature type="strand" evidence="7">
    <location>
        <begin position="83"/>
        <end position="85"/>
    </location>
</feature>
<feature type="helix" evidence="6">
    <location>
        <begin position="92"/>
        <end position="118"/>
    </location>
</feature>
<feature type="strand" evidence="6">
    <location>
        <begin position="122"/>
        <end position="124"/>
    </location>
</feature>
<feature type="helix" evidence="6">
    <location>
        <begin position="126"/>
        <end position="135"/>
    </location>
</feature>
<feature type="helix" evidence="6">
    <location>
        <begin position="137"/>
        <end position="142"/>
    </location>
</feature>
<feature type="turn" evidence="6">
    <location>
        <begin position="143"/>
        <end position="145"/>
    </location>
</feature>
<protein>
    <recommendedName>
        <fullName>Nuclear transcription factor Y subunit C-3</fullName>
        <shortName>AtNF-YC-3</shortName>
    </recommendedName>
</protein>
<reference key="1">
    <citation type="journal article" date="2000" name="Nature">
        <title>Sequence and analysis of chromosome 1 of the plant Arabidopsis thaliana.</title>
        <authorList>
            <person name="Theologis A."/>
            <person name="Ecker J.R."/>
            <person name="Palm C.J."/>
            <person name="Federspiel N.A."/>
            <person name="Kaul S."/>
            <person name="White O."/>
            <person name="Alonso J."/>
            <person name="Altafi H."/>
            <person name="Araujo R."/>
            <person name="Bowman C.L."/>
            <person name="Brooks S.Y."/>
            <person name="Buehler E."/>
            <person name="Chan A."/>
            <person name="Chao Q."/>
            <person name="Chen H."/>
            <person name="Cheuk R.F."/>
            <person name="Chin C.W."/>
            <person name="Chung M.K."/>
            <person name="Conn L."/>
            <person name="Conway A.B."/>
            <person name="Conway A.R."/>
            <person name="Creasy T.H."/>
            <person name="Dewar K."/>
            <person name="Dunn P."/>
            <person name="Etgu P."/>
            <person name="Feldblyum T.V."/>
            <person name="Feng J.-D."/>
            <person name="Fong B."/>
            <person name="Fujii C.Y."/>
            <person name="Gill J.E."/>
            <person name="Goldsmith A.D."/>
            <person name="Haas B."/>
            <person name="Hansen N.F."/>
            <person name="Hughes B."/>
            <person name="Huizar L."/>
            <person name="Hunter J.L."/>
            <person name="Jenkins J."/>
            <person name="Johnson-Hopson C."/>
            <person name="Khan S."/>
            <person name="Khaykin E."/>
            <person name="Kim C.J."/>
            <person name="Koo H.L."/>
            <person name="Kremenetskaia I."/>
            <person name="Kurtz D.B."/>
            <person name="Kwan A."/>
            <person name="Lam B."/>
            <person name="Langin-Hooper S."/>
            <person name="Lee A."/>
            <person name="Lee J.M."/>
            <person name="Lenz C.A."/>
            <person name="Li J.H."/>
            <person name="Li Y.-P."/>
            <person name="Lin X."/>
            <person name="Liu S.X."/>
            <person name="Liu Z.A."/>
            <person name="Luros J.S."/>
            <person name="Maiti R."/>
            <person name="Marziali A."/>
            <person name="Militscher J."/>
            <person name="Miranda M."/>
            <person name="Nguyen M."/>
            <person name="Nierman W.C."/>
            <person name="Osborne B.I."/>
            <person name="Pai G."/>
            <person name="Peterson J."/>
            <person name="Pham P.K."/>
            <person name="Rizzo M."/>
            <person name="Rooney T."/>
            <person name="Rowley D."/>
            <person name="Sakano H."/>
            <person name="Salzberg S.L."/>
            <person name="Schwartz J.R."/>
            <person name="Shinn P."/>
            <person name="Southwick A.M."/>
            <person name="Sun H."/>
            <person name="Tallon L.J."/>
            <person name="Tambunga G."/>
            <person name="Toriumi M.J."/>
            <person name="Town C.D."/>
            <person name="Utterback T."/>
            <person name="Van Aken S."/>
            <person name="Vaysberg M."/>
            <person name="Vysotskaia V.S."/>
            <person name="Walker M."/>
            <person name="Wu D."/>
            <person name="Yu G."/>
            <person name="Fraser C.M."/>
            <person name="Venter J.C."/>
            <person name="Davis R.W."/>
        </authorList>
    </citation>
    <scope>NUCLEOTIDE SEQUENCE [LARGE SCALE GENOMIC DNA]</scope>
    <source>
        <strain>cv. Columbia</strain>
    </source>
</reference>
<reference key="2">
    <citation type="journal article" date="2017" name="Plant J.">
        <title>Araport11: a complete reannotation of the Arabidopsis thaliana reference genome.</title>
        <authorList>
            <person name="Cheng C.Y."/>
            <person name="Krishnakumar V."/>
            <person name="Chan A.P."/>
            <person name="Thibaud-Nissen F."/>
            <person name="Schobel S."/>
            <person name="Town C.D."/>
        </authorList>
    </citation>
    <scope>GENOME REANNOTATION</scope>
    <source>
        <strain>cv. Columbia</strain>
    </source>
</reference>
<reference key="3">
    <citation type="journal article" date="2003" name="Science">
        <title>Empirical analysis of transcriptional activity in the Arabidopsis genome.</title>
        <authorList>
            <person name="Yamada K."/>
            <person name="Lim J."/>
            <person name="Dale J.M."/>
            <person name="Chen H."/>
            <person name="Shinn P."/>
            <person name="Palm C.J."/>
            <person name="Southwick A.M."/>
            <person name="Wu H.C."/>
            <person name="Kim C.J."/>
            <person name="Nguyen M."/>
            <person name="Pham P.K."/>
            <person name="Cheuk R.F."/>
            <person name="Karlin-Newmann G."/>
            <person name="Liu S.X."/>
            <person name="Lam B."/>
            <person name="Sakano H."/>
            <person name="Wu T."/>
            <person name="Yu G."/>
            <person name="Miranda M."/>
            <person name="Quach H.L."/>
            <person name="Tripp M."/>
            <person name="Chang C.H."/>
            <person name="Lee J.M."/>
            <person name="Toriumi M.J."/>
            <person name="Chan M.M."/>
            <person name="Tang C.C."/>
            <person name="Onodera C.S."/>
            <person name="Deng J.M."/>
            <person name="Akiyama K."/>
            <person name="Ansari Y."/>
            <person name="Arakawa T."/>
            <person name="Banh J."/>
            <person name="Banno F."/>
            <person name="Bowser L."/>
            <person name="Brooks S.Y."/>
            <person name="Carninci P."/>
            <person name="Chao Q."/>
            <person name="Choy N."/>
            <person name="Enju A."/>
            <person name="Goldsmith A.D."/>
            <person name="Gurjal M."/>
            <person name="Hansen N.F."/>
            <person name="Hayashizaki Y."/>
            <person name="Johnson-Hopson C."/>
            <person name="Hsuan V.W."/>
            <person name="Iida K."/>
            <person name="Karnes M."/>
            <person name="Khan S."/>
            <person name="Koesema E."/>
            <person name="Ishida J."/>
            <person name="Jiang P.X."/>
            <person name="Jones T."/>
            <person name="Kawai J."/>
            <person name="Kamiya A."/>
            <person name="Meyers C."/>
            <person name="Nakajima M."/>
            <person name="Narusaka M."/>
            <person name="Seki M."/>
            <person name="Sakurai T."/>
            <person name="Satou M."/>
            <person name="Tamse R."/>
            <person name="Vaysberg M."/>
            <person name="Wallender E.K."/>
            <person name="Wong C."/>
            <person name="Yamamura Y."/>
            <person name="Yuan S."/>
            <person name="Shinozaki K."/>
            <person name="Davis R.W."/>
            <person name="Theologis A."/>
            <person name="Ecker J.R."/>
        </authorList>
    </citation>
    <scope>NUCLEOTIDE SEQUENCE [LARGE SCALE MRNA]</scope>
    <source>
        <strain>cv. Columbia</strain>
    </source>
</reference>
<reference key="4">
    <citation type="submission" date="2002-03" db="EMBL/GenBank/DDBJ databases">
        <title>Full-length cDNA from Arabidopsis thaliana.</title>
        <authorList>
            <person name="Brover V.V."/>
            <person name="Troukhan M.E."/>
            <person name="Alexandrov N.A."/>
            <person name="Lu Y.-P."/>
            <person name="Flavell R.B."/>
            <person name="Feldmann K.A."/>
        </authorList>
    </citation>
    <scope>NUCLEOTIDE SEQUENCE [LARGE SCALE MRNA]</scope>
</reference>
<reference key="5">
    <citation type="journal article" date="2001" name="Gene">
        <title>Regulation of the CCAAT-binding NF-Y subunits in Arabidopsis thaliana.</title>
        <authorList>
            <person name="Gusmaroli G."/>
            <person name="Tonelli C."/>
            <person name="Mantovani R."/>
        </authorList>
    </citation>
    <scope>TISSUE SPECIFICITY</scope>
</reference>
<reference key="6">
    <citation type="journal article" date="2002" name="Gene">
        <title>Regulation of novel members of the Arabidopsis thaliana CCAAT-binding nuclear factor Y subunits.</title>
        <authorList>
            <person name="Gusmaroli G."/>
            <person name="Tonelli C."/>
            <person name="Mantovani R."/>
        </authorList>
    </citation>
    <scope>GENE FAMILY</scope>
    <scope>NOMENCLATURE</scope>
</reference>
<proteinExistence type="evidence at protein level"/>
<organism>
    <name type="scientific">Arabidopsis thaliana</name>
    <name type="common">Mouse-ear cress</name>
    <dbReference type="NCBI Taxonomy" id="3702"/>
    <lineage>
        <taxon>Eukaryota</taxon>
        <taxon>Viridiplantae</taxon>
        <taxon>Streptophyta</taxon>
        <taxon>Embryophyta</taxon>
        <taxon>Tracheophyta</taxon>
        <taxon>Spermatophyta</taxon>
        <taxon>Magnoliopsida</taxon>
        <taxon>eudicotyledons</taxon>
        <taxon>Gunneridae</taxon>
        <taxon>Pentapetalae</taxon>
        <taxon>rosids</taxon>
        <taxon>malvids</taxon>
        <taxon>Brassicales</taxon>
        <taxon>Brassicaceae</taxon>
        <taxon>Camelineae</taxon>
        <taxon>Arabidopsis</taxon>
    </lineage>
</organism>